<geneLocation type="chloroplast"/>
<proteinExistence type="inferred from homology"/>
<feature type="chain" id="PRO_0000219822" description="Light-independent protochlorophyllide reductase subunit B">
    <location>
        <begin position="1" status="less than"/>
        <end position="103" status="greater than"/>
    </location>
</feature>
<feature type="non-terminal residue">
    <location>
        <position position="1"/>
    </location>
</feature>
<feature type="non-terminal residue">
    <location>
        <position position="103"/>
    </location>
</feature>
<evidence type="ECO:0000250" key="1"/>
<evidence type="ECO:0000305" key="2"/>
<keyword id="KW-0004">4Fe-4S</keyword>
<keyword id="KW-0067">ATP-binding</keyword>
<keyword id="KW-0149">Chlorophyll biosynthesis</keyword>
<keyword id="KW-0150">Chloroplast</keyword>
<keyword id="KW-0408">Iron</keyword>
<keyword id="KW-0411">Iron-sulfur</keyword>
<keyword id="KW-0479">Metal-binding</keyword>
<keyword id="KW-0547">Nucleotide-binding</keyword>
<keyword id="KW-0560">Oxidoreductase</keyword>
<keyword id="KW-0602">Photosynthesis</keyword>
<keyword id="KW-0934">Plastid</keyword>
<reference key="1">
    <citation type="journal article" date="1996" name="Mol. Phylogenet. Evol.">
        <title>Phylogenetic inferences from chloroplast chlB gene sequences of Nephrolepis exaltata (Filicopsida), Ephedra altissima (Gnetopsida), and diverse land plants.</title>
        <authorList>
            <person name="Boivin R."/>
            <person name="Richard M."/>
            <person name="Beauseigle D."/>
            <person name="Bousquet J."/>
            <person name="Bellemare G."/>
        </authorList>
    </citation>
    <scope>NUCLEOTIDE SEQUENCE [GENOMIC DNA]</scope>
</reference>
<organism>
    <name type="scientific">Equisetum arvense</name>
    <name type="common">Field horsetail</name>
    <name type="synonym">Common horsetail</name>
    <dbReference type="NCBI Taxonomy" id="3258"/>
    <lineage>
        <taxon>Eukaryota</taxon>
        <taxon>Viridiplantae</taxon>
        <taxon>Streptophyta</taxon>
        <taxon>Embryophyta</taxon>
        <taxon>Tracheophyta</taxon>
        <taxon>Polypodiopsida</taxon>
        <taxon>Equisetidae</taxon>
        <taxon>Equisetales</taxon>
        <taxon>Equisetaceae</taxon>
        <taxon>Equisetum</taxon>
    </lineage>
</organism>
<protein>
    <recommendedName>
        <fullName>Light-independent protochlorophyllide reductase subunit B</fullName>
        <shortName>DPOR subunit B</shortName>
        <shortName>LI-POR subunit B</shortName>
        <ecNumber>1.3.7.7</ecNumber>
    </recommendedName>
</protein>
<sequence length="103" mass="11923">KRLLEDLGIKINEIIPEGASVKNLINLPKAWFNIVPYREVGLMTASFLQKDFGMPYILTTPMGIIDTADFIRQVQKNVNKLAPFFLNKTFDYESYIDYQTKFV</sequence>
<gene>
    <name type="primary">chlB</name>
</gene>
<name>CHLB_EQUAR</name>
<accession>P37845</accession>
<comment type="function">
    <text evidence="1">Component of the dark-operative protochlorophyllide reductase (DPOR) that uses Mg-ATP and reduced ferredoxin to reduce ring D of protochlorophyllide (Pchlide) to form chlorophyllide a (Chlide). This reaction is light-independent. The NB-protein (ChlN-ChlB) is the catalytic component of the complex (By similarity).</text>
</comment>
<comment type="catalytic activity">
    <reaction>
        <text>chlorophyllide a + oxidized 2[4Fe-4S]-[ferredoxin] + 2 ADP + 2 phosphate = protochlorophyllide a + reduced 2[4Fe-4S]-[ferredoxin] + 2 ATP + 2 H2O</text>
        <dbReference type="Rhea" id="RHEA:28202"/>
        <dbReference type="Rhea" id="RHEA-COMP:10002"/>
        <dbReference type="Rhea" id="RHEA-COMP:10004"/>
        <dbReference type="ChEBI" id="CHEBI:15377"/>
        <dbReference type="ChEBI" id="CHEBI:30616"/>
        <dbReference type="ChEBI" id="CHEBI:33722"/>
        <dbReference type="ChEBI" id="CHEBI:33723"/>
        <dbReference type="ChEBI" id="CHEBI:43474"/>
        <dbReference type="ChEBI" id="CHEBI:83348"/>
        <dbReference type="ChEBI" id="CHEBI:83350"/>
        <dbReference type="ChEBI" id="CHEBI:456216"/>
        <dbReference type="EC" id="1.3.7.7"/>
    </reaction>
</comment>
<comment type="cofactor">
    <cofactor evidence="1">
        <name>[4Fe-4S] cluster</name>
        <dbReference type="ChEBI" id="CHEBI:49883"/>
    </cofactor>
    <text evidence="1">Binds 1 [4Fe-4S] cluster per heterodimer. The cluster is bound at the heterodimer interface by residues from both subunits.</text>
</comment>
<comment type="pathway">
    <text>Porphyrin-containing compound metabolism; chlorophyll biosynthesis (light-independent).</text>
</comment>
<comment type="subunit">
    <text evidence="1">Protochlorophyllide reductase is composed of three subunits; ChlL, ChlN and ChlB. Forms a heterotetramer of two ChlB and two ChlN subunits (By similarity).</text>
</comment>
<comment type="subcellular location">
    <subcellularLocation>
        <location>Plastid</location>
        <location>Chloroplast</location>
    </subcellularLocation>
</comment>
<comment type="similarity">
    <text evidence="2">Belongs to the ChlB/BchB/BchZ family.</text>
</comment>
<dbReference type="EC" id="1.3.7.7"/>
<dbReference type="EMBL" id="L25766">
    <property type="protein sequence ID" value="AAC37486.1"/>
    <property type="molecule type" value="Genomic_DNA"/>
</dbReference>
<dbReference type="SMR" id="P37845"/>
<dbReference type="UniPathway" id="UPA00670"/>
<dbReference type="GO" id="GO:0009507">
    <property type="term" value="C:chloroplast"/>
    <property type="evidence" value="ECO:0007669"/>
    <property type="project" value="UniProtKB-SubCell"/>
</dbReference>
<dbReference type="GO" id="GO:0051539">
    <property type="term" value="F:4 iron, 4 sulfur cluster binding"/>
    <property type="evidence" value="ECO:0007669"/>
    <property type="project" value="UniProtKB-KW"/>
</dbReference>
<dbReference type="GO" id="GO:0005524">
    <property type="term" value="F:ATP binding"/>
    <property type="evidence" value="ECO:0007669"/>
    <property type="project" value="UniProtKB-KW"/>
</dbReference>
<dbReference type="GO" id="GO:0046872">
    <property type="term" value="F:metal ion binding"/>
    <property type="evidence" value="ECO:0007669"/>
    <property type="project" value="UniProtKB-KW"/>
</dbReference>
<dbReference type="GO" id="GO:0016491">
    <property type="term" value="F:oxidoreductase activity"/>
    <property type="evidence" value="ECO:0007669"/>
    <property type="project" value="UniProtKB-KW"/>
</dbReference>
<dbReference type="GO" id="GO:0036068">
    <property type="term" value="P:light-independent chlorophyll biosynthetic process"/>
    <property type="evidence" value="ECO:0007669"/>
    <property type="project" value="UniProtKB-UniPathway"/>
</dbReference>
<dbReference type="GO" id="GO:0015979">
    <property type="term" value="P:photosynthesis"/>
    <property type="evidence" value="ECO:0007669"/>
    <property type="project" value="UniProtKB-KW"/>
</dbReference>
<dbReference type="Gene3D" id="3.40.50.1980">
    <property type="entry name" value="Nitrogenase molybdenum iron protein domain"/>
    <property type="match status" value="1"/>
</dbReference>
<dbReference type="InterPro" id="IPR050152">
    <property type="entry name" value="ChlB/BchB/BchZ"/>
</dbReference>
<dbReference type="InterPro" id="IPR000510">
    <property type="entry name" value="Nase/OxRdtase_comp1"/>
</dbReference>
<dbReference type="PANTHER" id="PTHR33712">
    <property type="entry name" value="LIGHT-INDEPENDENT PROTOCHLOROPHYLLIDE REDUCTASE SUBUNIT B"/>
    <property type="match status" value="1"/>
</dbReference>
<dbReference type="PANTHER" id="PTHR33712:SF7">
    <property type="entry name" value="LIGHT-INDEPENDENT PROTOCHLOROPHYLLIDE REDUCTASE SUBUNIT B"/>
    <property type="match status" value="1"/>
</dbReference>
<dbReference type="Pfam" id="PF00148">
    <property type="entry name" value="Oxidored_nitro"/>
    <property type="match status" value="1"/>
</dbReference>
<dbReference type="SUPFAM" id="SSF53807">
    <property type="entry name" value="Helical backbone' metal receptor"/>
    <property type="match status" value="1"/>
</dbReference>